<organism>
    <name type="scientific">Corynebacterium efficiens (strain DSM 44549 / YS-314 / AJ 12310 / JCM 11189 / NBRC 100395)</name>
    <dbReference type="NCBI Taxonomy" id="196164"/>
    <lineage>
        <taxon>Bacteria</taxon>
        <taxon>Bacillati</taxon>
        <taxon>Actinomycetota</taxon>
        <taxon>Actinomycetes</taxon>
        <taxon>Mycobacteriales</taxon>
        <taxon>Corynebacteriaceae</taxon>
        <taxon>Corynebacterium</taxon>
    </lineage>
</organism>
<accession>Q8FSW7</accession>
<gene>
    <name type="ordered locus">CE2927</name>
</gene>
<reference key="1">
    <citation type="journal article" date="2003" name="Genome Res.">
        <title>Comparative complete genome sequence analysis of the amino acid replacements responsible for the thermostability of Corynebacterium efficiens.</title>
        <authorList>
            <person name="Nishio Y."/>
            <person name="Nakamura Y."/>
            <person name="Kawarabayasi Y."/>
            <person name="Usuda Y."/>
            <person name="Kimura E."/>
            <person name="Sugimoto S."/>
            <person name="Matsui K."/>
            <person name="Yamagishi A."/>
            <person name="Kikuchi H."/>
            <person name="Ikeo K."/>
            <person name="Gojobori T."/>
        </authorList>
    </citation>
    <scope>NUCLEOTIDE SEQUENCE [LARGE SCALE GENOMIC DNA]</scope>
    <source>
        <strain>DSM 44549 / YS-314 / AJ 12310 / JCM 11189 / NBRC 100395</strain>
    </source>
</reference>
<keyword id="KW-1185">Reference proteome</keyword>
<dbReference type="EMBL" id="BA000035">
    <property type="protein sequence ID" value="BAC19737.1"/>
    <property type="status" value="ALT_INIT"/>
    <property type="molecule type" value="Genomic_DNA"/>
</dbReference>
<dbReference type="RefSeq" id="WP_006768719.1">
    <property type="nucleotide sequence ID" value="NC_004369.1"/>
</dbReference>
<dbReference type="SMR" id="Q8FSW7"/>
<dbReference type="STRING" id="196164.gene:10743377"/>
<dbReference type="KEGG" id="cef:CE2927"/>
<dbReference type="eggNOG" id="COG1678">
    <property type="taxonomic scope" value="Bacteria"/>
</dbReference>
<dbReference type="HOGENOM" id="CLU_057596_2_0_11"/>
<dbReference type="OrthoDB" id="9807486at2"/>
<dbReference type="Proteomes" id="UP000001409">
    <property type="component" value="Chromosome"/>
</dbReference>
<dbReference type="GO" id="GO:0005829">
    <property type="term" value="C:cytosol"/>
    <property type="evidence" value="ECO:0007669"/>
    <property type="project" value="TreeGrafter"/>
</dbReference>
<dbReference type="Gene3D" id="3.40.1740.10">
    <property type="entry name" value="VC0467-like"/>
    <property type="match status" value="1"/>
</dbReference>
<dbReference type="HAMAP" id="MF_00758">
    <property type="entry name" value="UPF0301"/>
    <property type="match status" value="1"/>
</dbReference>
<dbReference type="InterPro" id="IPR003774">
    <property type="entry name" value="AlgH-like"/>
</dbReference>
<dbReference type="NCBIfam" id="NF001272">
    <property type="entry name" value="PRK00228.2-4"/>
    <property type="match status" value="1"/>
</dbReference>
<dbReference type="PANTHER" id="PTHR30327">
    <property type="entry name" value="UNCHARACTERIZED PROTEIN YQGE"/>
    <property type="match status" value="1"/>
</dbReference>
<dbReference type="PANTHER" id="PTHR30327:SF1">
    <property type="entry name" value="UPF0301 PROTEIN YQGE"/>
    <property type="match status" value="1"/>
</dbReference>
<dbReference type="Pfam" id="PF02622">
    <property type="entry name" value="DUF179"/>
    <property type="match status" value="1"/>
</dbReference>
<dbReference type="SUPFAM" id="SSF143456">
    <property type="entry name" value="VC0467-like"/>
    <property type="match status" value="1"/>
</dbReference>
<name>Y2927_COREF</name>
<feature type="chain" id="PRO_0000214320" description="UPF0301 protein CE2927">
    <location>
        <begin position="1"/>
        <end position="201"/>
    </location>
</feature>
<proteinExistence type="inferred from homology"/>
<comment type="similarity">
    <text evidence="1">Belongs to the UPF0301 (AlgH) family.</text>
</comment>
<comment type="sequence caution" evidence="2">
    <conflict type="erroneous initiation">
        <sequence resource="EMBL-CDS" id="BAC19737"/>
    </conflict>
</comment>
<sequence>MSDFYADRLFNALERNEVAPGSLLVAAPDLASPEFSRSVILVIEHSHATTFGVNLASRSDLAVANVLPEWTELTAKPQALYIGGPLSQQAVVGLGVTKPGVDIESSTKFNKLANRLVHVDLRVTPDEVRDDLEGMRFFAGYAEWAPGQLNDEIEQGDWYVAPALPSDVLAPGRVDVWGDVMRRQPMPLPLYSTHPSDPSDN</sequence>
<evidence type="ECO:0000255" key="1">
    <source>
        <dbReference type="HAMAP-Rule" id="MF_00758"/>
    </source>
</evidence>
<evidence type="ECO:0000305" key="2"/>
<protein>
    <recommendedName>
        <fullName evidence="1">UPF0301 protein CE2927</fullName>
    </recommendedName>
</protein>